<protein>
    <recommendedName>
        <fullName>Rho guanine nucleotide exchange factor 38</fullName>
    </recommendedName>
</protein>
<accession>Q80VK6</accession>
<accession>E2QRQ2</accession>
<accession>Q9D274</accession>
<evidence type="ECO:0000250" key="1"/>
<evidence type="ECO:0000255" key="2">
    <source>
        <dbReference type="PROSITE-ProRule" id="PRU00062"/>
    </source>
</evidence>
<evidence type="ECO:0000255" key="3">
    <source>
        <dbReference type="PROSITE-ProRule" id="PRU00192"/>
    </source>
</evidence>
<evidence type="ECO:0000255" key="4">
    <source>
        <dbReference type="PROSITE-ProRule" id="PRU00361"/>
    </source>
</evidence>
<evidence type="ECO:0000256" key="5">
    <source>
        <dbReference type="SAM" id="MobiDB-lite"/>
    </source>
</evidence>
<evidence type="ECO:0000303" key="6">
    <source>
    </source>
</evidence>
<evidence type="ECO:0000303" key="7">
    <source>
    </source>
</evidence>
<evidence type="ECO:0000305" key="8"/>
<evidence type="ECO:0007744" key="9">
    <source>
    </source>
</evidence>
<gene>
    <name type="primary">Arhgef38</name>
</gene>
<organism>
    <name type="scientific">Mus musculus</name>
    <name type="common">Mouse</name>
    <dbReference type="NCBI Taxonomy" id="10090"/>
    <lineage>
        <taxon>Eukaryota</taxon>
        <taxon>Metazoa</taxon>
        <taxon>Chordata</taxon>
        <taxon>Craniata</taxon>
        <taxon>Vertebrata</taxon>
        <taxon>Euteleostomi</taxon>
        <taxon>Mammalia</taxon>
        <taxon>Eutheria</taxon>
        <taxon>Euarchontoglires</taxon>
        <taxon>Glires</taxon>
        <taxon>Rodentia</taxon>
        <taxon>Myomorpha</taxon>
        <taxon>Muroidea</taxon>
        <taxon>Muridae</taxon>
        <taxon>Murinae</taxon>
        <taxon>Mus</taxon>
        <taxon>Mus</taxon>
    </lineage>
</organism>
<feature type="chain" id="PRO_0000318988" description="Rho guanine nucleotide exchange factor 38">
    <location>
        <begin position="1"/>
        <end position="770"/>
    </location>
</feature>
<feature type="domain" description="DH" evidence="2">
    <location>
        <begin position="94"/>
        <end position="285"/>
    </location>
</feature>
<feature type="domain" description="BAR" evidence="4">
    <location>
        <begin position="327"/>
        <end position="542"/>
    </location>
</feature>
<feature type="domain" description="SH3 1" evidence="3">
    <location>
        <begin position="581"/>
        <end position="644"/>
    </location>
</feature>
<feature type="domain" description="SH3 2" evidence="3">
    <location>
        <begin position="706"/>
        <end position="769"/>
    </location>
</feature>
<feature type="region of interest" description="Disordered" evidence="5">
    <location>
        <begin position="33"/>
        <end position="88"/>
    </location>
</feature>
<feature type="compositionally biased region" description="Low complexity" evidence="5">
    <location>
        <begin position="37"/>
        <end position="47"/>
    </location>
</feature>
<feature type="compositionally biased region" description="Basic and acidic residues" evidence="5">
    <location>
        <begin position="53"/>
        <end position="66"/>
    </location>
</feature>
<feature type="modified residue" description="Phosphothreonine" evidence="9">
    <location>
        <position position="34"/>
    </location>
</feature>
<feature type="splice variant" id="VSP_031334" description="In isoform 2." evidence="7">
    <original>EVFLQ</original>
    <variation>GNYAK</variation>
    <location>
        <begin position="171"/>
        <end position="175"/>
    </location>
</feature>
<feature type="splice variant" id="VSP_031335" description="In isoform 2." evidence="7">
    <location>
        <begin position="176"/>
        <end position="770"/>
    </location>
</feature>
<feature type="splice variant" id="VSP_053831" description="In isoform 1." evidence="6">
    <location>
        <begin position="220"/>
        <end position="770"/>
    </location>
</feature>
<feature type="sequence conflict" description="In Ref. 1; BAB32054." evidence="8" ref="1">
    <original>S</original>
    <variation>F</variation>
    <location>
        <position position="143"/>
    </location>
</feature>
<feature type="sequence conflict" description="In Ref. 1; BAB32054." evidence="8" ref="1">
    <original>H</original>
    <variation>R</variation>
    <location>
        <position position="145"/>
    </location>
</feature>
<feature type="sequence conflict" description="In Ref. 1; BAB32054." evidence="8" ref="1">
    <original>D</original>
    <variation>Y</variation>
    <location>
        <position position="161"/>
    </location>
</feature>
<comment type="function">
    <text evidence="1">May act as a guanine-nucleotide releasing factor.</text>
</comment>
<comment type="alternative products">
    <event type="alternative splicing"/>
    <isoform>
        <id>Q80VK6-3</id>
        <name>3</name>
        <sequence type="displayed"/>
    </isoform>
    <isoform>
        <id>Q80VK6-1</id>
        <name>1</name>
        <sequence type="described" ref="VSP_053831"/>
    </isoform>
    <isoform>
        <id>Q80VK6-2</id>
        <name>2</name>
        <sequence type="described" ref="VSP_031334 VSP_031335"/>
    </isoform>
</comment>
<dbReference type="EMBL" id="AK020284">
    <property type="protein sequence ID" value="BAB32054.1"/>
    <property type="molecule type" value="mRNA"/>
</dbReference>
<dbReference type="EMBL" id="AC124593">
    <property type="status" value="NOT_ANNOTATED_CDS"/>
    <property type="molecule type" value="Genomic_DNA"/>
</dbReference>
<dbReference type="EMBL" id="AC124605">
    <property type="status" value="NOT_ANNOTATED_CDS"/>
    <property type="molecule type" value="Genomic_DNA"/>
</dbReference>
<dbReference type="EMBL" id="BC049886">
    <property type="protein sequence ID" value="AAH49886.1"/>
    <property type="molecule type" value="mRNA"/>
</dbReference>
<dbReference type="CCDS" id="CCDS17849.1">
    <molecule id="Q80VK6-1"/>
</dbReference>
<dbReference type="CCDS" id="CCDS89690.1">
    <molecule id="Q80VK6-3"/>
</dbReference>
<dbReference type="RefSeq" id="NP_001355681.1">
    <molecule id="Q80VK6-3"/>
    <property type="nucleotide sequence ID" value="NM_001368752.1"/>
</dbReference>
<dbReference type="RefSeq" id="NP_084229.1">
    <molecule id="Q80VK6-1"/>
    <property type="nucleotide sequence ID" value="NM_029953.1"/>
</dbReference>
<dbReference type="SMR" id="Q80VK6"/>
<dbReference type="FunCoup" id="Q80VK6">
    <property type="interactions" value="1"/>
</dbReference>
<dbReference type="STRING" id="10090.ENSMUSP00000124280"/>
<dbReference type="GlyGen" id="Q80VK6">
    <property type="glycosylation" value="1 site"/>
</dbReference>
<dbReference type="iPTMnet" id="Q80VK6"/>
<dbReference type="PhosphoSitePlus" id="Q80VK6"/>
<dbReference type="PaxDb" id="10090-ENSMUSP00000114238"/>
<dbReference type="PeptideAtlas" id="Q80VK6"/>
<dbReference type="ProteomicsDB" id="283202">
    <molecule id="Q80VK6-3"/>
</dbReference>
<dbReference type="ProteomicsDB" id="283203">
    <molecule id="Q80VK6-1"/>
</dbReference>
<dbReference type="ProteomicsDB" id="283204">
    <molecule id="Q80VK6-2"/>
</dbReference>
<dbReference type="Antibodypedia" id="50147">
    <property type="antibodies" value="11 antibodies from 6 providers"/>
</dbReference>
<dbReference type="DNASU" id="77669"/>
<dbReference type="Ensembl" id="ENSMUST00000147041.10">
    <molecule id="Q80VK6-3"/>
    <property type="protein sequence ID" value="ENSMUSP00000114238.4"/>
    <property type="gene ID" value="ENSMUSG00000040969.16"/>
</dbReference>
<dbReference type="Ensembl" id="ENSMUST00000161022.9">
    <molecule id="Q80VK6-1"/>
    <property type="protein sequence ID" value="ENSMUSP00000124280.3"/>
    <property type="gene ID" value="ENSMUSG00000040969.16"/>
</dbReference>
<dbReference type="GeneID" id="77669"/>
<dbReference type="KEGG" id="mmu:77669"/>
<dbReference type="UCSC" id="uc008rkl.1">
    <molecule id="Q80VK6-1"/>
    <property type="organism name" value="mouse"/>
</dbReference>
<dbReference type="AGR" id="MGI:1924919"/>
<dbReference type="CTD" id="54848"/>
<dbReference type="MGI" id="MGI:1924919">
    <property type="gene designation" value="Arhgef38"/>
</dbReference>
<dbReference type="VEuPathDB" id="HostDB:ENSMUSG00000040969"/>
<dbReference type="eggNOG" id="KOG3519">
    <property type="taxonomic scope" value="Eukaryota"/>
</dbReference>
<dbReference type="GeneTree" id="ENSGT00950000183088"/>
<dbReference type="HOGENOM" id="CLU_005159_1_0_1"/>
<dbReference type="InParanoid" id="Q80VK6"/>
<dbReference type="OMA" id="NVQCYLQ"/>
<dbReference type="OrthoDB" id="6244550at2759"/>
<dbReference type="PhylomeDB" id="Q80VK6"/>
<dbReference type="TreeFam" id="TF317245"/>
<dbReference type="Reactome" id="R-MMU-193648">
    <property type="pathway name" value="NRAGE signals death through JNK"/>
</dbReference>
<dbReference type="Reactome" id="R-MMU-416482">
    <property type="pathway name" value="G alpha (12/13) signalling events"/>
</dbReference>
<dbReference type="BioGRID-ORCS" id="77669">
    <property type="hits" value="0 hits in 62 CRISPR screens"/>
</dbReference>
<dbReference type="ChiTaRS" id="Arhgef38">
    <property type="organism name" value="mouse"/>
</dbReference>
<dbReference type="PRO" id="PR:Q80VK6"/>
<dbReference type="Proteomes" id="UP000000589">
    <property type="component" value="Chromosome 3"/>
</dbReference>
<dbReference type="RNAct" id="Q80VK6">
    <property type="molecule type" value="protein"/>
</dbReference>
<dbReference type="Bgee" id="ENSMUSG00000040969">
    <property type="expression patterns" value="Expressed in epiblast cell in embryo and 17 other cell types or tissues"/>
</dbReference>
<dbReference type="ExpressionAtlas" id="Q80VK6">
    <property type="expression patterns" value="baseline and differential"/>
</dbReference>
<dbReference type="GO" id="GO:0005737">
    <property type="term" value="C:cytoplasm"/>
    <property type="evidence" value="ECO:0007669"/>
    <property type="project" value="InterPro"/>
</dbReference>
<dbReference type="GO" id="GO:0005085">
    <property type="term" value="F:guanyl-nucleotide exchange factor activity"/>
    <property type="evidence" value="ECO:0007669"/>
    <property type="project" value="UniProtKB-KW"/>
</dbReference>
<dbReference type="CDD" id="cd07589">
    <property type="entry name" value="BAR_DNMBP"/>
    <property type="match status" value="1"/>
</dbReference>
<dbReference type="CDD" id="cd00160">
    <property type="entry name" value="RhoGEF"/>
    <property type="match status" value="1"/>
</dbReference>
<dbReference type="CDD" id="cd12141">
    <property type="entry name" value="SH3_DNMBP_C2"/>
    <property type="match status" value="1"/>
</dbReference>
<dbReference type="FunFam" id="2.30.30.40:FF:000066">
    <property type="entry name" value="dynamin-binding protein isoform X1"/>
    <property type="match status" value="1"/>
</dbReference>
<dbReference type="FunFam" id="1.20.1270.60:FF:000061">
    <property type="entry name" value="Rho guanine nucleotide exchange factor 38"/>
    <property type="match status" value="1"/>
</dbReference>
<dbReference type="FunFam" id="2.30.30.40:FF:000193">
    <property type="entry name" value="Rho guanine nucleotide exchange factor 38"/>
    <property type="match status" value="1"/>
</dbReference>
<dbReference type="FunFam" id="1.20.900.10:FF:000032">
    <property type="entry name" value="rho guanine nucleotide exchange factor 38"/>
    <property type="match status" value="1"/>
</dbReference>
<dbReference type="Gene3D" id="1.20.1270.60">
    <property type="entry name" value="Arfaptin homology (AH) domain/BAR domain"/>
    <property type="match status" value="1"/>
</dbReference>
<dbReference type="Gene3D" id="1.20.900.10">
    <property type="entry name" value="Dbl homology (DH) domain"/>
    <property type="match status" value="1"/>
</dbReference>
<dbReference type="Gene3D" id="2.30.30.40">
    <property type="entry name" value="SH3 Domains"/>
    <property type="match status" value="2"/>
</dbReference>
<dbReference type="InterPro" id="IPR027267">
    <property type="entry name" value="AH/BAR_dom_sf"/>
</dbReference>
<dbReference type="InterPro" id="IPR004148">
    <property type="entry name" value="BAR_dom"/>
</dbReference>
<dbReference type="InterPro" id="IPR035899">
    <property type="entry name" value="DBL_dom_sf"/>
</dbReference>
<dbReference type="InterPro" id="IPR000219">
    <property type="entry name" value="DH_dom"/>
</dbReference>
<dbReference type="InterPro" id="IPR051492">
    <property type="entry name" value="Dynamin-Rho_GEF"/>
</dbReference>
<dbReference type="InterPro" id="IPR036028">
    <property type="entry name" value="SH3-like_dom_sf"/>
</dbReference>
<dbReference type="InterPro" id="IPR001452">
    <property type="entry name" value="SH3_domain"/>
</dbReference>
<dbReference type="PANTHER" id="PTHR22834">
    <property type="entry name" value="NUCLEAR FUSION PROTEIN FUS2"/>
    <property type="match status" value="1"/>
</dbReference>
<dbReference type="PANTHER" id="PTHR22834:SF17">
    <property type="entry name" value="RHO GUANINE NUCLEOTIDE EXCHANGE FACTOR 38"/>
    <property type="match status" value="1"/>
</dbReference>
<dbReference type="Pfam" id="PF03114">
    <property type="entry name" value="BAR"/>
    <property type="match status" value="1"/>
</dbReference>
<dbReference type="Pfam" id="PF00621">
    <property type="entry name" value="RhoGEF"/>
    <property type="match status" value="1"/>
</dbReference>
<dbReference type="Pfam" id="PF07653">
    <property type="entry name" value="SH3_2"/>
    <property type="match status" value="1"/>
</dbReference>
<dbReference type="Pfam" id="PF14604">
    <property type="entry name" value="SH3_9"/>
    <property type="match status" value="1"/>
</dbReference>
<dbReference type="SMART" id="SM00721">
    <property type="entry name" value="BAR"/>
    <property type="match status" value="1"/>
</dbReference>
<dbReference type="SMART" id="SM00325">
    <property type="entry name" value="RhoGEF"/>
    <property type="match status" value="1"/>
</dbReference>
<dbReference type="SMART" id="SM00326">
    <property type="entry name" value="SH3"/>
    <property type="match status" value="2"/>
</dbReference>
<dbReference type="SUPFAM" id="SSF103657">
    <property type="entry name" value="BAR/IMD domain-like"/>
    <property type="match status" value="1"/>
</dbReference>
<dbReference type="SUPFAM" id="SSF48065">
    <property type="entry name" value="DBL homology domain (DH-domain)"/>
    <property type="match status" value="1"/>
</dbReference>
<dbReference type="SUPFAM" id="SSF50044">
    <property type="entry name" value="SH3-domain"/>
    <property type="match status" value="2"/>
</dbReference>
<dbReference type="PROSITE" id="PS51021">
    <property type="entry name" value="BAR"/>
    <property type="match status" value="1"/>
</dbReference>
<dbReference type="PROSITE" id="PS50010">
    <property type="entry name" value="DH_2"/>
    <property type="match status" value="1"/>
</dbReference>
<dbReference type="PROSITE" id="PS50002">
    <property type="entry name" value="SH3"/>
    <property type="match status" value="2"/>
</dbReference>
<reference key="1">
    <citation type="journal article" date="2005" name="Science">
        <title>The transcriptional landscape of the mammalian genome.</title>
        <authorList>
            <person name="Carninci P."/>
            <person name="Kasukawa T."/>
            <person name="Katayama S."/>
            <person name="Gough J."/>
            <person name="Frith M.C."/>
            <person name="Maeda N."/>
            <person name="Oyama R."/>
            <person name="Ravasi T."/>
            <person name="Lenhard B."/>
            <person name="Wells C."/>
            <person name="Kodzius R."/>
            <person name="Shimokawa K."/>
            <person name="Bajic V.B."/>
            <person name="Brenner S.E."/>
            <person name="Batalov S."/>
            <person name="Forrest A.R."/>
            <person name="Zavolan M."/>
            <person name="Davis M.J."/>
            <person name="Wilming L.G."/>
            <person name="Aidinis V."/>
            <person name="Allen J.E."/>
            <person name="Ambesi-Impiombato A."/>
            <person name="Apweiler R."/>
            <person name="Aturaliya R.N."/>
            <person name="Bailey T.L."/>
            <person name="Bansal M."/>
            <person name="Baxter L."/>
            <person name="Beisel K.W."/>
            <person name="Bersano T."/>
            <person name="Bono H."/>
            <person name="Chalk A.M."/>
            <person name="Chiu K.P."/>
            <person name="Choudhary V."/>
            <person name="Christoffels A."/>
            <person name="Clutterbuck D.R."/>
            <person name="Crowe M.L."/>
            <person name="Dalla E."/>
            <person name="Dalrymple B.P."/>
            <person name="de Bono B."/>
            <person name="Della Gatta G."/>
            <person name="di Bernardo D."/>
            <person name="Down T."/>
            <person name="Engstrom P."/>
            <person name="Fagiolini M."/>
            <person name="Faulkner G."/>
            <person name="Fletcher C.F."/>
            <person name="Fukushima T."/>
            <person name="Furuno M."/>
            <person name="Futaki S."/>
            <person name="Gariboldi M."/>
            <person name="Georgii-Hemming P."/>
            <person name="Gingeras T.R."/>
            <person name="Gojobori T."/>
            <person name="Green R.E."/>
            <person name="Gustincich S."/>
            <person name="Harbers M."/>
            <person name="Hayashi Y."/>
            <person name="Hensch T.K."/>
            <person name="Hirokawa N."/>
            <person name="Hill D."/>
            <person name="Huminiecki L."/>
            <person name="Iacono M."/>
            <person name="Ikeo K."/>
            <person name="Iwama A."/>
            <person name="Ishikawa T."/>
            <person name="Jakt M."/>
            <person name="Kanapin A."/>
            <person name="Katoh M."/>
            <person name="Kawasawa Y."/>
            <person name="Kelso J."/>
            <person name="Kitamura H."/>
            <person name="Kitano H."/>
            <person name="Kollias G."/>
            <person name="Krishnan S.P."/>
            <person name="Kruger A."/>
            <person name="Kummerfeld S.K."/>
            <person name="Kurochkin I.V."/>
            <person name="Lareau L.F."/>
            <person name="Lazarevic D."/>
            <person name="Lipovich L."/>
            <person name="Liu J."/>
            <person name="Liuni S."/>
            <person name="McWilliam S."/>
            <person name="Madan Babu M."/>
            <person name="Madera M."/>
            <person name="Marchionni L."/>
            <person name="Matsuda H."/>
            <person name="Matsuzawa S."/>
            <person name="Miki H."/>
            <person name="Mignone F."/>
            <person name="Miyake S."/>
            <person name="Morris K."/>
            <person name="Mottagui-Tabar S."/>
            <person name="Mulder N."/>
            <person name="Nakano N."/>
            <person name="Nakauchi H."/>
            <person name="Ng P."/>
            <person name="Nilsson R."/>
            <person name="Nishiguchi S."/>
            <person name="Nishikawa S."/>
            <person name="Nori F."/>
            <person name="Ohara O."/>
            <person name="Okazaki Y."/>
            <person name="Orlando V."/>
            <person name="Pang K.C."/>
            <person name="Pavan W.J."/>
            <person name="Pavesi G."/>
            <person name="Pesole G."/>
            <person name="Petrovsky N."/>
            <person name="Piazza S."/>
            <person name="Reed J."/>
            <person name="Reid J.F."/>
            <person name="Ring B.Z."/>
            <person name="Ringwald M."/>
            <person name="Rost B."/>
            <person name="Ruan Y."/>
            <person name="Salzberg S.L."/>
            <person name="Sandelin A."/>
            <person name="Schneider C."/>
            <person name="Schoenbach C."/>
            <person name="Sekiguchi K."/>
            <person name="Semple C.A."/>
            <person name="Seno S."/>
            <person name="Sessa L."/>
            <person name="Sheng Y."/>
            <person name="Shibata Y."/>
            <person name="Shimada H."/>
            <person name="Shimada K."/>
            <person name="Silva D."/>
            <person name="Sinclair B."/>
            <person name="Sperling S."/>
            <person name="Stupka E."/>
            <person name="Sugiura K."/>
            <person name="Sultana R."/>
            <person name="Takenaka Y."/>
            <person name="Taki K."/>
            <person name="Tammoja K."/>
            <person name="Tan S.L."/>
            <person name="Tang S."/>
            <person name="Taylor M.S."/>
            <person name="Tegner J."/>
            <person name="Teichmann S.A."/>
            <person name="Ueda H.R."/>
            <person name="van Nimwegen E."/>
            <person name="Verardo R."/>
            <person name="Wei C.L."/>
            <person name="Yagi K."/>
            <person name="Yamanishi H."/>
            <person name="Zabarovsky E."/>
            <person name="Zhu S."/>
            <person name="Zimmer A."/>
            <person name="Hide W."/>
            <person name="Bult C."/>
            <person name="Grimmond S.M."/>
            <person name="Teasdale R.D."/>
            <person name="Liu E.T."/>
            <person name="Brusic V."/>
            <person name="Quackenbush J."/>
            <person name="Wahlestedt C."/>
            <person name="Mattick J.S."/>
            <person name="Hume D.A."/>
            <person name="Kai C."/>
            <person name="Sasaki D."/>
            <person name="Tomaru Y."/>
            <person name="Fukuda S."/>
            <person name="Kanamori-Katayama M."/>
            <person name="Suzuki M."/>
            <person name="Aoki J."/>
            <person name="Arakawa T."/>
            <person name="Iida J."/>
            <person name="Imamura K."/>
            <person name="Itoh M."/>
            <person name="Kato T."/>
            <person name="Kawaji H."/>
            <person name="Kawagashira N."/>
            <person name="Kawashima T."/>
            <person name="Kojima M."/>
            <person name="Kondo S."/>
            <person name="Konno H."/>
            <person name="Nakano K."/>
            <person name="Ninomiya N."/>
            <person name="Nishio T."/>
            <person name="Okada M."/>
            <person name="Plessy C."/>
            <person name="Shibata K."/>
            <person name="Shiraki T."/>
            <person name="Suzuki S."/>
            <person name="Tagami M."/>
            <person name="Waki K."/>
            <person name="Watahiki A."/>
            <person name="Okamura-Oho Y."/>
            <person name="Suzuki H."/>
            <person name="Kawai J."/>
            <person name="Hayashizaki Y."/>
        </authorList>
    </citation>
    <scope>NUCLEOTIDE SEQUENCE [LARGE SCALE MRNA] (ISOFORM 2)</scope>
    <source>
        <strain>C57BL/6J</strain>
        <tissue>Cecum</tissue>
    </source>
</reference>
<reference key="2">
    <citation type="journal article" date="2009" name="PLoS Biol.">
        <title>Lineage-specific biology revealed by a finished genome assembly of the mouse.</title>
        <authorList>
            <person name="Church D.M."/>
            <person name="Goodstadt L."/>
            <person name="Hillier L.W."/>
            <person name="Zody M.C."/>
            <person name="Goldstein S."/>
            <person name="She X."/>
            <person name="Bult C.J."/>
            <person name="Agarwala R."/>
            <person name="Cherry J.L."/>
            <person name="DiCuccio M."/>
            <person name="Hlavina W."/>
            <person name="Kapustin Y."/>
            <person name="Meric P."/>
            <person name="Maglott D."/>
            <person name="Birtle Z."/>
            <person name="Marques A.C."/>
            <person name="Graves T."/>
            <person name="Zhou S."/>
            <person name="Teague B."/>
            <person name="Potamousis K."/>
            <person name="Churas C."/>
            <person name="Place M."/>
            <person name="Herschleb J."/>
            <person name="Runnheim R."/>
            <person name="Forrest D."/>
            <person name="Amos-Landgraf J."/>
            <person name="Schwartz D.C."/>
            <person name="Cheng Z."/>
            <person name="Lindblad-Toh K."/>
            <person name="Eichler E.E."/>
            <person name="Ponting C.P."/>
        </authorList>
    </citation>
    <scope>NUCLEOTIDE SEQUENCE [LARGE SCALE GENOMIC DNA]</scope>
    <source>
        <strain>C57BL/6J</strain>
    </source>
</reference>
<reference key="3">
    <citation type="journal article" date="2004" name="Genome Res.">
        <title>The status, quality, and expansion of the NIH full-length cDNA project: the Mammalian Gene Collection (MGC).</title>
        <authorList>
            <consortium name="The MGC Project Team"/>
        </authorList>
    </citation>
    <scope>NUCLEOTIDE SEQUENCE [LARGE SCALE MRNA] (ISOFORM 1)</scope>
    <source>
        <strain>FVB/N</strain>
        <tissue>Mammary tumor</tissue>
    </source>
</reference>
<reference key="4">
    <citation type="journal article" date="2010" name="Cell">
        <title>A tissue-specific atlas of mouse protein phosphorylation and expression.</title>
        <authorList>
            <person name="Huttlin E.L."/>
            <person name="Jedrychowski M.P."/>
            <person name="Elias J.E."/>
            <person name="Goswami T."/>
            <person name="Rad R."/>
            <person name="Beausoleil S.A."/>
            <person name="Villen J."/>
            <person name="Haas W."/>
            <person name="Sowa M.E."/>
            <person name="Gygi S.P."/>
        </authorList>
    </citation>
    <scope>PHOSPHORYLATION [LARGE SCALE ANALYSIS] AT THR-34</scope>
    <scope>IDENTIFICATION BY MASS SPECTROMETRY [LARGE SCALE ANALYSIS]</scope>
    <source>
        <tissue>Kidney</tissue>
    </source>
</reference>
<name>ARH38_MOUSE</name>
<sequence length="770" mass="87679">MEPREAAGKETMGSKKKNLTFLRSRLYMLERRKTDTVVDSSVSGDHSGSLRRSQSDRTEYNQKLQEKMTPQAECSSAETPTPEDEQQVGRMMAKRAKIIRELIQTERDYLTDLELCLREVVQPLRSKQIDRLDVEGLFSNIESVHQISAKLLSLLEEATTDVEPAMQVIGEVFLQIKGPLEDIYKIYCYHHDEAHSVLESYEKEEELKQHLSHCLQSLKNIYLQEGKPNLLDMGSLMIKPIQRVMKYPLLLCELRNSTPPSHPDYRALGEAFAAVKDINVNINELKRRKDLVLKYKKNEEEESLKDKLSKLNIHSISKKSKRVTNHLKILTRGESQVKDNTFNREEKLFRSLEKTVRLCVKNISSCLQHIEEATPFTLQSGAELREISYQDGEKNGTEPQDQASKPYQDFAARSQRLILNPLSALLSLFPGPQKLIQKRYDKLLDYNSSLPRSATTESDLAKREYEALNAQLVEELQAFNQAAKTILLNCLCSFVTLLRDLMQVALQAYSTVKTVPLPVLGISEIQSRVLEEVHSLTFVKENSATFIERKLSFEKKKPAQILPEVPHQTDAHRSKLLSTYGAEELYRAKRKCNATQEHDINLLEGELVAVLEQKDPLGSTSRWFVDTGCVKGYVYSSFLKPHNPGKGQKVDADNRFCDDDFENISLFVSCRPAGDRVSISDSSSSLSGSCGKFETNGADADNFQEVDEQIFYAVHAFQARSDHELSLQEYQRVHILRFCDLSGNKEWWLAEAQGQKGYVPANYLGKMTYA</sequence>
<proteinExistence type="evidence at protein level"/>
<keyword id="KW-0025">Alternative splicing</keyword>
<keyword id="KW-0175">Coiled coil</keyword>
<keyword id="KW-0344">Guanine-nucleotide releasing factor</keyword>
<keyword id="KW-0597">Phosphoprotein</keyword>
<keyword id="KW-1185">Reference proteome</keyword>
<keyword id="KW-0677">Repeat</keyword>
<keyword id="KW-0728">SH3 domain</keyword>